<comment type="catalytic activity">
    <reaction evidence="1">
        <text>CMP + ATP = CDP + ADP</text>
        <dbReference type="Rhea" id="RHEA:11600"/>
        <dbReference type="ChEBI" id="CHEBI:30616"/>
        <dbReference type="ChEBI" id="CHEBI:58069"/>
        <dbReference type="ChEBI" id="CHEBI:60377"/>
        <dbReference type="ChEBI" id="CHEBI:456216"/>
        <dbReference type="EC" id="2.7.4.25"/>
    </reaction>
</comment>
<comment type="catalytic activity">
    <reaction evidence="1">
        <text>dCMP + ATP = dCDP + ADP</text>
        <dbReference type="Rhea" id="RHEA:25094"/>
        <dbReference type="ChEBI" id="CHEBI:30616"/>
        <dbReference type="ChEBI" id="CHEBI:57566"/>
        <dbReference type="ChEBI" id="CHEBI:58593"/>
        <dbReference type="ChEBI" id="CHEBI:456216"/>
        <dbReference type="EC" id="2.7.4.25"/>
    </reaction>
</comment>
<comment type="subcellular location">
    <subcellularLocation>
        <location evidence="1">Cytoplasm</location>
    </subcellularLocation>
</comment>
<comment type="similarity">
    <text evidence="1">Belongs to the cytidylate kinase family. Type 1 subfamily.</text>
</comment>
<keyword id="KW-0067">ATP-binding</keyword>
<keyword id="KW-0963">Cytoplasm</keyword>
<keyword id="KW-0418">Kinase</keyword>
<keyword id="KW-0547">Nucleotide-binding</keyword>
<keyword id="KW-1185">Reference proteome</keyword>
<keyword id="KW-0808">Transferase</keyword>
<gene>
    <name evidence="1" type="primary">cmk</name>
    <name type="ordered locus">CKO_02163</name>
</gene>
<evidence type="ECO:0000255" key="1">
    <source>
        <dbReference type="HAMAP-Rule" id="MF_00238"/>
    </source>
</evidence>
<name>KCY_CITK8</name>
<reference key="1">
    <citation type="submission" date="2007-08" db="EMBL/GenBank/DDBJ databases">
        <authorList>
            <consortium name="The Citrobacter koseri Genome Sequencing Project"/>
            <person name="McClelland M."/>
            <person name="Sanderson E.K."/>
            <person name="Porwollik S."/>
            <person name="Spieth J."/>
            <person name="Clifton W.S."/>
            <person name="Latreille P."/>
            <person name="Courtney L."/>
            <person name="Wang C."/>
            <person name="Pepin K."/>
            <person name="Bhonagiri V."/>
            <person name="Nash W."/>
            <person name="Johnson M."/>
            <person name="Thiruvilangam P."/>
            <person name="Wilson R."/>
        </authorList>
    </citation>
    <scope>NUCLEOTIDE SEQUENCE [LARGE SCALE GENOMIC DNA]</scope>
    <source>
        <strain>ATCC BAA-895 / CDC 4225-83 / SGSC4696</strain>
    </source>
</reference>
<feature type="chain" id="PRO_1000048209" description="Cytidylate kinase">
    <location>
        <begin position="1"/>
        <end position="227"/>
    </location>
</feature>
<feature type="binding site" evidence="1">
    <location>
        <begin position="12"/>
        <end position="20"/>
    </location>
    <ligand>
        <name>ATP</name>
        <dbReference type="ChEBI" id="CHEBI:30616"/>
    </ligand>
</feature>
<accession>A8AIH4</accession>
<sequence length="227" mass="24775">MTAIAPVITIDGPSGAGKGTLCKAMAEALQWHLLDSGAIYRVLALAALHHHVDVTSEDALVPLASHLDVRFVSTNGNLEVILEGEDVSGEIRTQEVANAASQVAAFPRVREALLRRQRAFRDAPGLIADGRDMGTVVFPDAPVKIFLDASSEERAHRRMLQLQEKGFSVNFERLLAEIKERDDRDRNRAVAPLVPAADALVLDSTRLSIEQVIEKALQYARQKLALA</sequence>
<protein>
    <recommendedName>
        <fullName evidence="1">Cytidylate kinase</fullName>
        <shortName evidence="1">CK</shortName>
        <ecNumber evidence="1">2.7.4.25</ecNumber>
    </recommendedName>
    <alternativeName>
        <fullName evidence="1">Cytidine monophosphate kinase</fullName>
        <shortName evidence="1">CMP kinase</shortName>
    </alternativeName>
</protein>
<proteinExistence type="inferred from homology"/>
<organism>
    <name type="scientific">Citrobacter koseri (strain ATCC BAA-895 / CDC 4225-83 / SGSC4696)</name>
    <dbReference type="NCBI Taxonomy" id="290338"/>
    <lineage>
        <taxon>Bacteria</taxon>
        <taxon>Pseudomonadati</taxon>
        <taxon>Pseudomonadota</taxon>
        <taxon>Gammaproteobacteria</taxon>
        <taxon>Enterobacterales</taxon>
        <taxon>Enterobacteriaceae</taxon>
        <taxon>Citrobacter</taxon>
    </lineage>
</organism>
<dbReference type="EC" id="2.7.4.25" evidence="1"/>
<dbReference type="EMBL" id="CP000822">
    <property type="protein sequence ID" value="ABV13287.1"/>
    <property type="molecule type" value="Genomic_DNA"/>
</dbReference>
<dbReference type="RefSeq" id="WP_012133018.1">
    <property type="nucleotide sequence ID" value="NC_009792.1"/>
</dbReference>
<dbReference type="SMR" id="A8AIH4"/>
<dbReference type="STRING" id="290338.CKO_02163"/>
<dbReference type="GeneID" id="45136099"/>
<dbReference type="KEGG" id="cko:CKO_02163"/>
<dbReference type="HOGENOM" id="CLU_079959_0_2_6"/>
<dbReference type="OrthoDB" id="9807434at2"/>
<dbReference type="Proteomes" id="UP000008148">
    <property type="component" value="Chromosome"/>
</dbReference>
<dbReference type="GO" id="GO:0005829">
    <property type="term" value="C:cytosol"/>
    <property type="evidence" value="ECO:0007669"/>
    <property type="project" value="TreeGrafter"/>
</dbReference>
<dbReference type="GO" id="GO:0005524">
    <property type="term" value="F:ATP binding"/>
    <property type="evidence" value="ECO:0007669"/>
    <property type="project" value="UniProtKB-UniRule"/>
</dbReference>
<dbReference type="GO" id="GO:0036430">
    <property type="term" value="F:CMP kinase activity"/>
    <property type="evidence" value="ECO:0007669"/>
    <property type="project" value="RHEA"/>
</dbReference>
<dbReference type="GO" id="GO:0036431">
    <property type="term" value="F:dCMP kinase activity"/>
    <property type="evidence" value="ECO:0007669"/>
    <property type="project" value="RHEA"/>
</dbReference>
<dbReference type="GO" id="GO:0015949">
    <property type="term" value="P:nucleobase-containing small molecule interconversion"/>
    <property type="evidence" value="ECO:0007669"/>
    <property type="project" value="TreeGrafter"/>
</dbReference>
<dbReference type="GO" id="GO:0006220">
    <property type="term" value="P:pyrimidine nucleotide metabolic process"/>
    <property type="evidence" value="ECO:0007669"/>
    <property type="project" value="UniProtKB-UniRule"/>
</dbReference>
<dbReference type="CDD" id="cd02020">
    <property type="entry name" value="CMPK"/>
    <property type="match status" value="1"/>
</dbReference>
<dbReference type="FunFam" id="3.40.50.300:FF:000262">
    <property type="entry name" value="Cytidylate kinase"/>
    <property type="match status" value="1"/>
</dbReference>
<dbReference type="Gene3D" id="3.40.50.300">
    <property type="entry name" value="P-loop containing nucleotide triphosphate hydrolases"/>
    <property type="match status" value="1"/>
</dbReference>
<dbReference type="HAMAP" id="MF_00238">
    <property type="entry name" value="Cytidyl_kinase_type1"/>
    <property type="match status" value="1"/>
</dbReference>
<dbReference type="InterPro" id="IPR003136">
    <property type="entry name" value="Cytidylate_kin"/>
</dbReference>
<dbReference type="InterPro" id="IPR011994">
    <property type="entry name" value="Cytidylate_kinase_dom"/>
</dbReference>
<dbReference type="InterPro" id="IPR027417">
    <property type="entry name" value="P-loop_NTPase"/>
</dbReference>
<dbReference type="NCBIfam" id="TIGR00017">
    <property type="entry name" value="cmk"/>
    <property type="match status" value="1"/>
</dbReference>
<dbReference type="PANTHER" id="PTHR21299:SF2">
    <property type="entry name" value="CYTIDYLATE KINASE"/>
    <property type="match status" value="1"/>
</dbReference>
<dbReference type="PANTHER" id="PTHR21299">
    <property type="entry name" value="CYTIDYLATE KINASE/PANTOATE-BETA-ALANINE LIGASE"/>
    <property type="match status" value="1"/>
</dbReference>
<dbReference type="Pfam" id="PF02224">
    <property type="entry name" value="Cytidylate_kin"/>
    <property type="match status" value="1"/>
</dbReference>
<dbReference type="SUPFAM" id="SSF52540">
    <property type="entry name" value="P-loop containing nucleoside triphosphate hydrolases"/>
    <property type="match status" value="1"/>
</dbReference>